<comment type="function">
    <text evidence="1">Catalyzes the transfer of a dimethylallyl group onto the adenine at position 37 in tRNAs that read codons beginning with uridine, leading to the formation of N6-(dimethylallyl)adenosine (i(6)A).</text>
</comment>
<comment type="catalytic activity">
    <reaction evidence="1">
        <text>adenosine(37) in tRNA + dimethylallyl diphosphate = N(6)-dimethylallyladenosine(37) in tRNA + diphosphate</text>
        <dbReference type="Rhea" id="RHEA:26482"/>
        <dbReference type="Rhea" id="RHEA-COMP:10162"/>
        <dbReference type="Rhea" id="RHEA-COMP:10375"/>
        <dbReference type="ChEBI" id="CHEBI:33019"/>
        <dbReference type="ChEBI" id="CHEBI:57623"/>
        <dbReference type="ChEBI" id="CHEBI:74411"/>
        <dbReference type="ChEBI" id="CHEBI:74415"/>
        <dbReference type="EC" id="2.5.1.75"/>
    </reaction>
</comment>
<comment type="cofactor">
    <cofactor evidence="1">
        <name>Mg(2+)</name>
        <dbReference type="ChEBI" id="CHEBI:18420"/>
    </cofactor>
</comment>
<comment type="subunit">
    <text evidence="1">Monomer.</text>
</comment>
<comment type="similarity">
    <text evidence="1">Belongs to the IPP transferase family.</text>
</comment>
<keyword id="KW-0067">ATP-binding</keyword>
<keyword id="KW-0460">Magnesium</keyword>
<keyword id="KW-0547">Nucleotide-binding</keyword>
<keyword id="KW-1185">Reference proteome</keyword>
<keyword id="KW-0808">Transferase</keyword>
<keyword id="KW-0819">tRNA processing</keyword>
<accession>B7KDM5</accession>
<proteinExistence type="inferred from homology"/>
<sequence length="304" mass="34172">MKTPLIVICGPTASGKSGLAIDLSVRLNSIIISADSRQVYREFDIGTAKPSIDEQKLIPHYLIDICEPTESLTLAQYQEKAQLIIHSFSSVVSPILVGGTGLYLKSVVKGMKIPRVSPQPQLRSQLEALGQSYLYNLLSQVDPIASQKIHPHDQIRTIRALEVFYVTGKPISSQQGENPPDYPIIQIGLDCEVNALEKRIQQRTEQMIESGLVEEVEKLIDKYGENLPLLDTLGYAEMKQYLAGKISLSEAKELTVLHTRQFAKRQRTWFRAYPEIHWFDANAPHLLDQVTQLIRDNCSLIVSH</sequence>
<name>MIAA_GLOC7</name>
<feature type="chain" id="PRO_0000377133" description="tRNA dimethylallyltransferase">
    <location>
        <begin position="1"/>
        <end position="304"/>
    </location>
</feature>
<feature type="region of interest" description="Interaction with substrate tRNA" evidence="1">
    <location>
        <begin position="35"/>
        <end position="38"/>
    </location>
</feature>
<feature type="binding site" evidence="1">
    <location>
        <begin position="10"/>
        <end position="17"/>
    </location>
    <ligand>
        <name>ATP</name>
        <dbReference type="ChEBI" id="CHEBI:30616"/>
    </ligand>
</feature>
<feature type="binding site" evidence="1">
    <location>
        <begin position="12"/>
        <end position="17"/>
    </location>
    <ligand>
        <name>substrate</name>
    </ligand>
</feature>
<feature type="site" description="Interaction with substrate tRNA" evidence="1">
    <location>
        <position position="100"/>
    </location>
</feature>
<protein>
    <recommendedName>
        <fullName evidence="1">tRNA dimethylallyltransferase</fullName>
        <ecNumber evidence="1">2.5.1.75</ecNumber>
    </recommendedName>
    <alternativeName>
        <fullName evidence="1">Dimethylallyl diphosphate:tRNA dimethylallyltransferase</fullName>
        <shortName evidence="1">DMAPP:tRNA dimethylallyltransferase</shortName>
        <shortName evidence="1">DMATase</shortName>
    </alternativeName>
    <alternativeName>
        <fullName evidence="1">Isopentenyl-diphosphate:tRNA isopentenyltransferase</fullName>
        <shortName evidence="1">IPP transferase</shortName>
        <shortName evidence="1">IPPT</shortName>
        <shortName evidence="1">IPTase</shortName>
    </alternativeName>
</protein>
<organism>
    <name type="scientific">Gloeothece citriformis (strain PCC 7424)</name>
    <name type="common">Cyanothece sp. (strain PCC 7424)</name>
    <dbReference type="NCBI Taxonomy" id="65393"/>
    <lineage>
        <taxon>Bacteria</taxon>
        <taxon>Bacillati</taxon>
        <taxon>Cyanobacteriota</taxon>
        <taxon>Cyanophyceae</taxon>
        <taxon>Oscillatoriophycideae</taxon>
        <taxon>Chroococcales</taxon>
        <taxon>Aphanothecaceae</taxon>
        <taxon>Gloeothece</taxon>
        <taxon>Gloeothece citriformis</taxon>
    </lineage>
</organism>
<gene>
    <name evidence="1" type="primary">miaA</name>
    <name type="ordered locus">PCC7424_1895</name>
</gene>
<reference key="1">
    <citation type="journal article" date="2011" name="MBio">
        <title>Novel metabolic attributes of the genus Cyanothece, comprising a group of unicellular nitrogen-fixing Cyanobacteria.</title>
        <authorList>
            <person name="Bandyopadhyay A."/>
            <person name="Elvitigala T."/>
            <person name="Welsh E."/>
            <person name="Stockel J."/>
            <person name="Liberton M."/>
            <person name="Min H."/>
            <person name="Sherman L.A."/>
            <person name="Pakrasi H.B."/>
        </authorList>
    </citation>
    <scope>NUCLEOTIDE SEQUENCE [LARGE SCALE GENOMIC DNA]</scope>
    <source>
        <strain>PCC 7424</strain>
    </source>
</reference>
<evidence type="ECO:0000255" key="1">
    <source>
        <dbReference type="HAMAP-Rule" id="MF_00185"/>
    </source>
</evidence>
<dbReference type="EC" id="2.5.1.75" evidence="1"/>
<dbReference type="EMBL" id="CP001291">
    <property type="protein sequence ID" value="ACK70327.1"/>
    <property type="molecule type" value="Genomic_DNA"/>
</dbReference>
<dbReference type="RefSeq" id="WP_012599270.1">
    <property type="nucleotide sequence ID" value="NC_011729.1"/>
</dbReference>
<dbReference type="SMR" id="B7KDM5"/>
<dbReference type="STRING" id="65393.PCC7424_1895"/>
<dbReference type="KEGG" id="cyc:PCC7424_1895"/>
<dbReference type="eggNOG" id="COG0324">
    <property type="taxonomic scope" value="Bacteria"/>
</dbReference>
<dbReference type="HOGENOM" id="CLU_032616_0_1_3"/>
<dbReference type="OrthoDB" id="9776390at2"/>
<dbReference type="Proteomes" id="UP000002384">
    <property type="component" value="Chromosome"/>
</dbReference>
<dbReference type="GO" id="GO:0005524">
    <property type="term" value="F:ATP binding"/>
    <property type="evidence" value="ECO:0007669"/>
    <property type="project" value="UniProtKB-UniRule"/>
</dbReference>
<dbReference type="GO" id="GO:0052381">
    <property type="term" value="F:tRNA dimethylallyltransferase activity"/>
    <property type="evidence" value="ECO:0007669"/>
    <property type="project" value="UniProtKB-UniRule"/>
</dbReference>
<dbReference type="GO" id="GO:0006400">
    <property type="term" value="P:tRNA modification"/>
    <property type="evidence" value="ECO:0007669"/>
    <property type="project" value="TreeGrafter"/>
</dbReference>
<dbReference type="Gene3D" id="1.10.20.140">
    <property type="match status" value="1"/>
</dbReference>
<dbReference type="Gene3D" id="3.40.50.300">
    <property type="entry name" value="P-loop containing nucleotide triphosphate hydrolases"/>
    <property type="match status" value="1"/>
</dbReference>
<dbReference type="HAMAP" id="MF_00185">
    <property type="entry name" value="IPP_trans"/>
    <property type="match status" value="1"/>
</dbReference>
<dbReference type="InterPro" id="IPR039657">
    <property type="entry name" value="Dimethylallyltransferase"/>
</dbReference>
<dbReference type="InterPro" id="IPR018022">
    <property type="entry name" value="IPT"/>
</dbReference>
<dbReference type="InterPro" id="IPR027417">
    <property type="entry name" value="P-loop_NTPase"/>
</dbReference>
<dbReference type="NCBIfam" id="TIGR00174">
    <property type="entry name" value="miaA"/>
    <property type="match status" value="1"/>
</dbReference>
<dbReference type="PANTHER" id="PTHR11088">
    <property type="entry name" value="TRNA DIMETHYLALLYLTRANSFERASE"/>
    <property type="match status" value="1"/>
</dbReference>
<dbReference type="PANTHER" id="PTHR11088:SF60">
    <property type="entry name" value="TRNA DIMETHYLALLYLTRANSFERASE"/>
    <property type="match status" value="1"/>
</dbReference>
<dbReference type="Pfam" id="PF01715">
    <property type="entry name" value="IPPT"/>
    <property type="match status" value="1"/>
</dbReference>
<dbReference type="SUPFAM" id="SSF52540">
    <property type="entry name" value="P-loop containing nucleoside triphosphate hydrolases"/>
    <property type="match status" value="2"/>
</dbReference>